<dbReference type="EC" id="1.-.-.-" evidence="7"/>
<dbReference type="EMBL" id="JNNZ01000128">
    <property type="status" value="NOT_ANNOTATED_CDS"/>
    <property type="molecule type" value="Genomic_DNA"/>
</dbReference>
<dbReference type="SMR" id="P9WEY1"/>
<dbReference type="GlyCosmos" id="P9WEY1">
    <property type="glycosylation" value="3 sites, No reported glycans"/>
</dbReference>
<dbReference type="VEuPathDB" id="FungiDB:MAN_09470"/>
<dbReference type="UniPathway" id="UPA00213"/>
<dbReference type="GO" id="GO:0016020">
    <property type="term" value="C:membrane"/>
    <property type="evidence" value="ECO:0007669"/>
    <property type="project" value="UniProtKB-SubCell"/>
</dbReference>
<dbReference type="GO" id="GO:0071949">
    <property type="term" value="F:FAD binding"/>
    <property type="evidence" value="ECO:0007669"/>
    <property type="project" value="InterPro"/>
</dbReference>
<dbReference type="GO" id="GO:0004497">
    <property type="term" value="F:monooxygenase activity"/>
    <property type="evidence" value="ECO:0007669"/>
    <property type="project" value="UniProtKB-KW"/>
</dbReference>
<dbReference type="GO" id="GO:0016114">
    <property type="term" value="P:terpenoid biosynthetic process"/>
    <property type="evidence" value="ECO:0007669"/>
    <property type="project" value="UniProtKB-UniPathway"/>
</dbReference>
<dbReference type="Gene3D" id="3.50.50.60">
    <property type="entry name" value="FAD/NAD(P)-binding domain"/>
    <property type="match status" value="1"/>
</dbReference>
<dbReference type="InterPro" id="IPR002938">
    <property type="entry name" value="FAD-bd"/>
</dbReference>
<dbReference type="InterPro" id="IPR036188">
    <property type="entry name" value="FAD/NAD-bd_sf"/>
</dbReference>
<dbReference type="InterPro" id="IPR050562">
    <property type="entry name" value="FAD_mOase_fung"/>
</dbReference>
<dbReference type="PANTHER" id="PTHR47356:SF2">
    <property type="entry name" value="FAD-BINDING DOMAIN-CONTAINING PROTEIN-RELATED"/>
    <property type="match status" value="1"/>
</dbReference>
<dbReference type="PANTHER" id="PTHR47356">
    <property type="entry name" value="FAD-DEPENDENT MONOOXYGENASE ASQG-RELATED"/>
    <property type="match status" value="1"/>
</dbReference>
<dbReference type="Pfam" id="PF01494">
    <property type="entry name" value="FAD_binding_3"/>
    <property type="match status" value="1"/>
</dbReference>
<dbReference type="PRINTS" id="PR00420">
    <property type="entry name" value="RNGMNOXGNASE"/>
</dbReference>
<dbReference type="SUPFAM" id="SSF51905">
    <property type="entry name" value="FAD/NAD(P)-binding domain"/>
    <property type="match status" value="1"/>
</dbReference>
<accession>P9WEY1</accession>
<reference key="1">
    <citation type="journal article" date="2014" name="BMC Genomics">
        <title>Comparative genome analysis of entomopathogenic fungi reveals a complex set of secreted proteins.</title>
        <authorList>
            <person name="Staats C.C."/>
            <person name="Junges A."/>
            <person name="Guedes R.L."/>
            <person name="Thompson C.E."/>
            <person name="de Morais G.L."/>
            <person name="Boldo J.T."/>
            <person name="de Almeida L.G."/>
            <person name="Andreis F.C."/>
            <person name="Gerber A.L."/>
            <person name="Sbaraini N."/>
            <person name="da Paixao R.L."/>
            <person name="Broetto L."/>
            <person name="Landell M."/>
            <person name="Santi L."/>
            <person name="Beys-da-Silva W.O."/>
            <person name="Silveira C.P."/>
            <person name="Serrano T.R."/>
            <person name="de Oliveira E.S."/>
            <person name="Kmetzsch L."/>
            <person name="Vainstein M.H."/>
            <person name="de Vasconcelos A.T."/>
            <person name="Schrank A."/>
        </authorList>
    </citation>
    <scope>NUCLEOTIDE SEQUENCE [LARGE SCALE GENOMIC DNA]</scope>
</reference>
<reference key="2">
    <citation type="journal article" date="2020" name="Nat. Commun.">
        <title>Synthetic biology based construction of biological activity-related library of fungal decalin-containing diterpenoid pyrones.</title>
        <authorList>
            <person name="Tsukada K."/>
            <person name="Shinki S."/>
            <person name="Kaneko A."/>
            <person name="Murakami K."/>
            <person name="Irie K."/>
            <person name="Murai M."/>
            <person name="Miyoshi H."/>
            <person name="Dan S."/>
            <person name="Kawaji K."/>
            <person name="Hayashi H."/>
            <person name="Kodama E.N."/>
            <person name="Hori A."/>
            <person name="Salim E."/>
            <person name="Kuraishi T."/>
            <person name="Hirata N."/>
            <person name="Kanda Y."/>
            <person name="Asai T."/>
        </authorList>
    </citation>
    <scope>FUNCTION</scope>
    <scope>PATHWAY</scope>
    <scope>BIOTECHNOLOGY</scope>
</reference>
<protein>
    <recommendedName>
        <fullName evidence="5">FAD-dependent monooxygenase dpmaE</fullName>
        <ecNumber evidence="7">1.-.-.-</ecNumber>
    </recommendedName>
    <alternativeName>
        <fullName evidence="5">Diterpenoid pyrone biosynthesis cluster protein E</fullName>
    </alternativeName>
</protein>
<sequence>MSQRQFKVIIIGGSVTGLTLAHSLHKIGIDYVVLEKRDTVTPQEGASIGILPNGARILDQLGLYEAIEDEAPPLGATRIHFPDGFAFTSLYPKRMRHSFGYPIAFLERRQLLRILYDALPDKTRIHVNKTMSTIEHFTKDEITGARVLTKEGDVYEGDLIVGADGIHSQTRGEIWRRINSSKSAFKTAEEYSCCFGISKCVTGLIAGEQVMHMRNGRTLVVIPSKDEVVFWFLVEKLDRKYTYSEAPRFTIDDATALCSQVFTLPIGNNIKFEDVWNKREVVNMLSLEESCLSTWSTGRLVCIGDSIHKMTVNLGQGANCAIEDVAVLCNLLRNMCQLKSGTRPTEQEIDLLLRRFNKQHLSRVTQITNMSKLTVRVHARKGVLHRLVGRYVMPYFGAYFEARPFNMLADAASLDFIPLPKSSYPGWEKYSSKTRGNSRLLPLMFTLPLLYFGLSWIVGIYWKPGYLHAWNS</sequence>
<name>DPMAE_METAN</name>
<keyword id="KW-0274">FAD</keyword>
<keyword id="KW-0285">Flavoprotein</keyword>
<keyword id="KW-0325">Glycoprotein</keyword>
<keyword id="KW-0472">Membrane</keyword>
<keyword id="KW-0503">Monooxygenase</keyword>
<keyword id="KW-0560">Oxidoreductase</keyword>
<keyword id="KW-0732">Signal</keyword>
<keyword id="KW-0812">Transmembrane</keyword>
<keyword id="KW-1133">Transmembrane helix</keyword>
<comment type="function">
    <text evidence="4 7">FAD-dependent monooxygenase; part of the gene cluster that mediates the biosynthesis of the diterpenoid pyrones subglutinols A and B (PubMed:32286350). The first step of the pathway is the synthesis of the alpha-pyrone moiety by the polyketide synthase dpmaA via condensation of one acetyl-CoA starter unit with 3 malonyl-CoA units and 2 methylations (Probable). The alpha-pyrone is then combined with geranylgeranyl pyrophosphate (GGPP) formed by the GGPP synthase dpmaD through the action of the prenyltransferase dpmaC to yield a linear alpha-pyrone diterpenoid (Probable). Subsequent steps in the diterpenoid pyrone biosynthetic pathway involve the decalin core formation, which is initiated by the epoxidation of the C10-C11 olefin by the FAD-dependent oxidoreductase dpmaE, and is followed by a cyclization cascade catalyzed by the terpene cyclase dpmaB (Probable). The dehydrogenase dpmaF is then involved in tetrahydrofuran (THF) ring formation at the C5 unit to complete the formation of subglutinols A and B (PubMed:32286350).</text>
</comment>
<comment type="cofactor">
    <cofactor evidence="6">
        <name>FAD</name>
        <dbReference type="ChEBI" id="CHEBI:57692"/>
    </cofactor>
</comment>
<comment type="pathway">
    <text evidence="4">Secondary metabolite biosynthesis; terpenoid biosynthesis.</text>
</comment>
<comment type="subcellular location">
    <subcellularLocation>
        <location evidence="2">Membrane</location>
        <topology evidence="2">Single-pass membrane protein</topology>
    </subcellularLocation>
</comment>
<comment type="biotechnology">
    <text evidence="4">Diterpenoid pyrones display various biological activities and subglutinol A shows insecticidal and anti-HIV activities.</text>
</comment>
<comment type="similarity">
    <text evidence="6">Belongs to the paxM FAD-dependent monooxygenase family.</text>
</comment>
<evidence type="ECO:0000250" key="1">
    <source>
        <dbReference type="UniProtKB" id="B8M9J8"/>
    </source>
</evidence>
<evidence type="ECO:0000255" key="2"/>
<evidence type="ECO:0000255" key="3">
    <source>
        <dbReference type="PROSITE-ProRule" id="PRU00498"/>
    </source>
</evidence>
<evidence type="ECO:0000269" key="4">
    <source>
    </source>
</evidence>
<evidence type="ECO:0000303" key="5">
    <source>
    </source>
</evidence>
<evidence type="ECO:0000305" key="6"/>
<evidence type="ECO:0000305" key="7">
    <source>
    </source>
</evidence>
<feature type="signal peptide" evidence="2">
    <location>
        <begin position="1"/>
        <end position="24"/>
    </location>
</feature>
<feature type="chain" id="PRO_0000451545" description="FAD-dependent monooxygenase dpmaE">
    <location>
        <begin position="25"/>
        <end position="472"/>
    </location>
</feature>
<feature type="transmembrane region" description="Helical" evidence="2">
    <location>
        <begin position="440"/>
        <end position="460"/>
    </location>
</feature>
<feature type="binding site" evidence="1">
    <location>
        <position position="35"/>
    </location>
    <ligand>
        <name>FAD</name>
        <dbReference type="ChEBI" id="CHEBI:57692"/>
    </ligand>
</feature>
<feature type="binding site" evidence="1">
    <location>
        <position position="49"/>
    </location>
    <ligand>
        <name>FAD</name>
        <dbReference type="ChEBI" id="CHEBI:57692"/>
    </ligand>
</feature>
<feature type="binding site" evidence="1">
    <location>
        <position position="108"/>
    </location>
    <ligand>
        <name>FAD</name>
        <dbReference type="ChEBI" id="CHEBI:57692"/>
    </ligand>
</feature>
<feature type="binding site" evidence="1">
    <location>
        <position position="305"/>
    </location>
    <ligand>
        <name>FAD</name>
        <dbReference type="ChEBI" id="CHEBI:57692"/>
    </ligand>
</feature>
<feature type="binding site" evidence="1">
    <location>
        <position position="318"/>
    </location>
    <ligand>
        <name>FAD</name>
        <dbReference type="ChEBI" id="CHEBI:57692"/>
    </ligand>
</feature>
<feature type="glycosylation site" description="N-linked (GlcNAc...) asparagine" evidence="3">
    <location>
        <position position="128"/>
    </location>
</feature>
<feature type="glycosylation site" description="N-linked (GlcNAc...) asparagine" evidence="3">
    <location>
        <position position="179"/>
    </location>
</feature>
<feature type="glycosylation site" description="N-linked (GlcNAc...) asparagine" evidence="3">
    <location>
        <position position="369"/>
    </location>
</feature>
<proteinExistence type="evidence at protein level"/>
<organism>
    <name type="scientific">Metarhizium anisopliae</name>
    <name type="common">Entomophthora anisopliae</name>
    <dbReference type="NCBI Taxonomy" id="5530"/>
    <lineage>
        <taxon>Eukaryota</taxon>
        <taxon>Fungi</taxon>
        <taxon>Dikarya</taxon>
        <taxon>Ascomycota</taxon>
        <taxon>Pezizomycotina</taxon>
        <taxon>Sordariomycetes</taxon>
        <taxon>Hypocreomycetidae</taxon>
        <taxon>Hypocreales</taxon>
        <taxon>Clavicipitaceae</taxon>
        <taxon>Metarhizium</taxon>
    </lineage>
</organism>
<gene>
    <name evidence="5" type="primary">dpmaE</name>
</gene>